<keyword id="KW-0067">ATP-binding</keyword>
<keyword id="KW-0325">Glycoprotein</keyword>
<keyword id="KW-0418">Kinase</keyword>
<keyword id="KW-0460">Magnesium</keyword>
<keyword id="KW-0464">Manganese</keyword>
<keyword id="KW-0472">Membrane</keyword>
<keyword id="KW-0479">Metal-binding</keyword>
<keyword id="KW-0547">Nucleotide-binding</keyword>
<keyword id="KW-0597">Phosphoprotein</keyword>
<keyword id="KW-0675">Receptor</keyword>
<keyword id="KW-1185">Reference proteome</keyword>
<keyword id="KW-0723">Serine/threonine-protein kinase</keyword>
<keyword id="KW-0732">Signal</keyword>
<keyword id="KW-0808">Transferase</keyword>
<keyword id="KW-0812">Transmembrane</keyword>
<keyword id="KW-1133">Transmembrane helix</keyword>
<accession>Q28041</accession>
<reference key="1">
    <citation type="submission" date="1996-06" db="EMBL/GenBank/DDBJ databases">
        <title>Bovine activin receptor type I can be expressed as a kinase-domain truncated receptor.</title>
        <authorList>
            <person name="Ethier J.-F."/>
            <person name="Lussier J.G."/>
            <person name="Daneau I."/>
            <person name="Silversides D.W."/>
        </authorList>
    </citation>
    <scope>NUCLEOTIDE SEQUENCE [MRNA]</scope>
</reference>
<protein>
    <recommendedName>
        <fullName>Activin receptor type-1</fullName>
        <ecNumber>2.7.11.30</ecNumber>
    </recommendedName>
    <alternativeName>
        <fullName>Activin receptor type I</fullName>
        <shortName>ACTR-I</shortName>
    </alternativeName>
    <alternativeName>
        <fullName>Serine/threonine-protein kinase receptor R1</fullName>
        <shortName>SKR1</shortName>
    </alternativeName>
</protein>
<evidence type="ECO:0000250" key="1"/>
<evidence type="ECO:0000250" key="2">
    <source>
        <dbReference type="UniProtKB" id="P37172"/>
    </source>
</evidence>
<evidence type="ECO:0000250" key="3">
    <source>
        <dbReference type="UniProtKB" id="Q04771"/>
    </source>
</evidence>
<evidence type="ECO:0000255" key="4"/>
<evidence type="ECO:0000255" key="5">
    <source>
        <dbReference type="PROSITE-ProRule" id="PRU00159"/>
    </source>
</evidence>
<evidence type="ECO:0000255" key="6">
    <source>
        <dbReference type="PROSITE-ProRule" id="PRU00585"/>
    </source>
</evidence>
<evidence type="ECO:0000255" key="7">
    <source>
        <dbReference type="PROSITE-ProRule" id="PRU10027"/>
    </source>
</evidence>
<evidence type="ECO:0000305" key="8"/>
<dbReference type="EC" id="2.7.11.30"/>
<dbReference type="EMBL" id="U58095">
    <property type="protein sequence ID" value="AAB02696.1"/>
    <property type="molecule type" value="mRNA"/>
</dbReference>
<dbReference type="SMR" id="Q28041"/>
<dbReference type="FunCoup" id="Q28041">
    <property type="interactions" value="396"/>
</dbReference>
<dbReference type="STRING" id="9913.ENSBTAP00000015797"/>
<dbReference type="GlyCosmos" id="Q28041">
    <property type="glycosylation" value="1 site, No reported glycans"/>
</dbReference>
<dbReference type="GlyGen" id="Q28041">
    <property type="glycosylation" value="1 site"/>
</dbReference>
<dbReference type="PaxDb" id="9913-ENSBTAP00000015797"/>
<dbReference type="eggNOG" id="KOG2052">
    <property type="taxonomic scope" value="Eukaryota"/>
</dbReference>
<dbReference type="InParanoid" id="Q28041"/>
<dbReference type="OrthoDB" id="69842at2759"/>
<dbReference type="Proteomes" id="UP000009136">
    <property type="component" value="Unplaced"/>
</dbReference>
<dbReference type="GO" id="GO:0048179">
    <property type="term" value="C:activin receptor complex"/>
    <property type="evidence" value="ECO:0000250"/>
    <property type="project" value="AgBase"/>
</dbReference>
<dbReference type="GO" id="GO:0070724">
    <property type="term" value="C:BMP receptor complex"/>
    <property type="evidence" value="ECO:0000318"/>
    <property type="project" value="GO_Central"/>
</dbReference>
<dbReference type="GO" id="GO:0005886">
    <property type="term" value="C:plasma membrane"/>
    <property type="evidence" value="ECO:0000250"/>
    <property type="project" value="AgBase"/>
</dbReference>
<dbReference type="GO" id="GO:0016361">
    <property type="term" value="F:activin receptor activity, type I"/>
    <property type="evidence" value="ECO:0000250"/>
    <property type="project" value="AgBase"/>
</dbReference>
<dbReference type="GO" id="GO:0005524">
    <property type="term" value="F:ATP binding"/>
    <property type="evidence" value="ECO:0007669"/>
    <property type="project" value="UniProtKB-KW"/>
</dbReference>
<dbReference type="GO" id="GO:0046872">
    <property type="term" value="F:metal ion binding"/>
    <property type="evidence" value="ECO:0007669"/>
    <property type="project" value="UniProtKB-KW"/>
</dbReference>
<dbReference type="GO" id="GO:0046332">
    <property type="term" value="F:SMAD binding"/>
    <property type="evidence" value="ECO:0000318"/>
    <property type="project" value="GO_Central"/>
</dbReference>
<dbReference type="GO" id="GO:0050431">
    <property type="term" value="F:transforming growth factor beta binding"/>
    <property type="evidence" value="ECO:0000250"/>
    <property type="project" value="AgBase"/>
</dbReference>
<dbReference type="GO" id="GO:0005025">
    <property type="term" value="F:transforming growth factor beta receptor activity, type I"/>
    <property type="evidence" value="ECO:0000318"/>
    <property type="project" value="GO_Central"/>
</dbReference>
<dbReference type="GO" id="GO:0030509">
    <property type="term" value="P:BMP signaling pathway"/>
    <property type="evidence" value="ECO:0000318"/>
    <property type="project" value="GO_Central"/>
</dbReference>
<dbReference type="GO" id="GO:0030154">
    <property type="term" value="P:cell differentiation"/>
    <property type="evidence" value="ECO:0000318"/>
    <property type="project" value="GO_Central"/>
</dbReference>
<dbReference type="GO" id="GO:0071363">
    <property type="term" value="P:cellular response to growth factor stimulus"/>
    <property type="evidence" value="ECO:0000318"/>
    <property type="project" value="GO_Central"/>
</dbReference>
<dbReference type="GO" id="GO:0007368">
    <property type="term" value="P:determination of left/right symmetry"/>
    <property type="evidence" value="ECO:0000250"/>
    <property type="project" value="AgBase"/>
</dbReference>
<dbReference type="GO" id="GO:0009953">
    <property type="term" value="P:dorsal/ventral pattern formation"/>
    <property type="evidence" value="ECO:0000318"/>
    <property type="project" value="GO_Central"/>
</dbReference>
<dbReference type="GO" id="GO:0007281">
    <property type="term" value="P:germ cell development"/>
    <property type="evidence" value="ECO:0000250"/>
    <property type="project" value="AgBase"/>
</dbReference>
<dbReference type="GO" id="GO:0007507">
    <property type="term" value="P:heart development"/>
    <property type="evidence" value="ECO:0000250"/>
    <property type="project" value="AgBase"/>
</dbReference>
<dbReference type="GO" id="GO:0001701">
    <property type="term" value="P:in utero embryonic development"/>
    <property type="evidence" value="ECO:0000250"/>
    <property type="project" value="AgBase"/>
</dbReference>
<dbReference type="GO" id="GO:0001755">
    <property type="term" value="P:neural crest cell migration"/>
    <property type="evidence" value="ECO:0000250"/>
    <property type="project" value="AgBase"/>
</dbReference>
<dbReference type="GO" id="GO:0007179">
    <property type="term" value="P:transforming growth factor beta receptor signaling pathway"/>
    <property type="evidence" value="ECO:0000250"/>
    <property type="project" value="AgBase"/>
</dbReference>
<dbReference type="GO" id="GO:0001655">
    <property type="term" value="P:urogenital system development"/>
    <property type="evidence" value="ECO:0000250"/>
    <property type="project" value="AgBase"/>
</dbReference>
<dbReference type="CDD" id="cd14142">
    <property type="entry name" value="STKc_ACVR1_ALK1"/>
    <property type="match status" value="1"/>
</dbReference>
<dbReference type="CDD" id="cd23535">
    <property type="entry name" value="TFP_LU_ECD_ALK2"/>
    <property type="match status" value="1"/>
</dbReference>
<dbReference type="FunFam" id="1.10.510.10:FF:000018">
    <property type="entry name" value="Receptor protein serine/threonine kinase"/>
    <property type="match status" value="1"/>
</dbReference>
<dbReference type="FunFam" id="3.30.200.20:FF:000064">
    <property type="entry name" value="Receptor protein serine/threonine kinase"/>
    <property type="match status" value="1"/>
</dbReference>
<dbReference type="FunFam" id="2.10.60.10:FF:000008">
    <property type="entry name" value="Serine/threonine-protein kinase receptor"/>
    <property type="match status" value="1"/>
</dbReference>
<dbReference type="Gene3D" id="2.10.60.10">
    <property type="entry name" value="CD59"/>
    <property type="match status" value="1"/>
</dbReference>
<dbReference type="Gene3D" id="3.30.200.20">
    <property type="entry name" value="Phosphorylase Kinase, domain 1"/>
    <property type="match status" value="1"/>
</dbReference>
<dbReference type="Gene3D" id="1.10.510.10">
    <property type="entry name" value="Transferase(Phosphotransferase) domain 1"/>
    <property type="match status" value="1"/>
</dbReference>
<dbReference type="InterPro" id="IPR000472">
    <property type="entry name" value="Activin_recp"/>
</dbReference>
<dbReference type="InterPro" id="IPR003605">
    <property type="entry name" value="GS_dom"/>
</dbReference>
<dbReference type="InterPro" id="IPR011009">
    <property type="entry name" value="Kinase-like_dom_sf"/>
</dbReference>
<dbReference type="InterPro" id="IPR000719">
    <property type="entry name" value="Prot_kinase_dom"/>
</dbReference>
<dbReference type="InterPro" id="IPR017441">
    <property type="entry name" value="Protein_kinase_ATP_BS"/>
</dbReference>
<dbReference type="InterPro" id="IPR008271">
    <property type="entry name" value="Ser/Thr_kinase_AS"/>
</dbReference>
<dbReference type="InterPro" id="IPR045860">
    <property type="entry name" value="Snake_toxin-like_sf"/>
</dbReference>
<dbReference type="InterPro" id="IPR000333">
    <property type="entry name" value="TGFB_receptor"/>
</dbReference>
<dbReference type="PANTHER" id="PTHR23255:SF69">
    <property type="entry name" value="ACTIVIN RECEPTOR TYPE-1"/>
    <property type="match status" value="1"/>
</dbReference>
<dbReference type="PANTHER" id="PTHR23255">
    <property type="entry name" value="TRANSFORMING GROWTH FACTOR-BETA RECEPTOR TYPE I AND II"/>
    <property type="match status" value="1"/>
</dbReference>
<dbReference type="Pfam" id="PF01064">
    <property type="entry name" value="Activin_recp"/>
    <property type="match status" value="1"/>
</dbReference>
<dbReference type="Pfam" id="PF00069">
    <property type="entry name" value="Pkinase"/>
    <property type="match status" value="1"/>
</dbReference>
<dbReference type="Pfam" id="PF08515">
    <property type="entry name" value="TGF_beta_GS"/>
    <property type="match status" value="1"/>
</dbReference>
<dbReference type="PRINTS" id="PR00653">
    <property type="entry name" value="ACTIVIN2R"/>
</dbReference>
<dbReference type="SMART" id="SM00467">
    <property type="entry name" value="GS"/>
    <property type="match status" value="1"/>
</dbReference>
<dbReference type="SMART" id="SM00220">
    <property type="entry name" value="S_TKc"/>
    <property type="match status" value="1"/>
</dbReference>
<dbReference type="SUPFAM" id="SSF56112">
    <property type="entry name" value="Protein kinase-like (PK-like)"/>
    <property type="match status" value="1"/>
</dbReference>
<dbReference type="SUPFAM" id="SSF57302">
    <property type="entry name" value="Snake toxin-like"/>
    <property type="match status" value="1"/>
</dbReference>
<dbReference type="PROSITE" id="PS51256">
    <property type="entry name" value="GS"/>
    <property type="match status" value="1"/>
</dbReference>
<dbReference type="PROSITE" id="PS00107">
    <property type="entry name" value="PROTEIN_KINASE_ATP"/>
    <property type="match status" value="1"/>
</dbReference>
<dbReference type="PROSITE" id="PS50011">
    <property type="entry name" value="PROTEIN_KINASE_DOM"/>
    <property type="match status" value="1"/>
</dbReference>
<dbReference type="PROSITE" id="PS00108">
    <property type="entry name" value="PROTEIN_KINASE_ST"/>
    <property type="match status" value="1"/>
</dbReference>
<gene>
    <name type="primary">ACVR1</name>
    <name type="synonym">ACVRLK2</name>
</gene>
<proteinExistence type="evidence at transcript level"/>
<name>ACVR1_BOVIN</name>
<sequence length="509" mass="57190">MVDGVMILPVLVMIAFPFPSMEDEKPKVNPKLYMCVCEGLSCGDEAHCEGQQCFSSLSINDGFHVYQKGCFQVYEQGKMTCKTPPSPGQAVECCQGDWCNRNITAQLPTKGKSFPGTQNFHLEVGLIILSVVFAVCLLACLLGVALRKFKRRNQERLNPRDVEYGTIEGLITTNVGDSTLADLLDHSCTSGSGSGLPFLVQRTVARQITLLECVGKGRYGEVWRGSWQGENVAVKIFSSRDEKSWFRETELYNTVMLRHENILGFIASDMTSRHSSTQLWLITHYHEMGSLYDYLQLTTLDTVSCLRIVLSIASGLAHLHIEIFGTQGKPAIAHRDLKSKNILVKKNGQCCIADLGLAVMHSQSTNQLDVGNNPRVGTKRYMAPEVLDETIQVDCFDSYKRVDIWAFGLVLWEVARRMVSNGIVEDYKPPFYDVVPNDPSFEDMRKVVCVDQQRPNIPNRWFSDPTLTSLAKLMKECWYQNPSARLTALRIKKTLTKIDNSLDKLKTDC</sequence>
<organism>
    <name type="scientific">Bos taurus</name>
    <name type="common">Bovine</name>
    <dbReference type="NCBI Taxonomy" id="9913"/>
    <lineage>
        <taxon>Eukaryota</taxon>
        <taxon>Metazoa</taxon>
        <taxon>Chordata</taxon>
        <taxon>Craniata</taxon>
        <taxon>Vertebrata</taxon>
        <taxon>Euteleostomi</taxon>
        <taxon>Mammalia</taxon>
        <taxon>Eutheria</taxon>
        <taxon>Laurasiatheria</taxon>
        <taxon>Artiodactyla</taxon>
        <taxon>Ruminantia</taxon>
        <taxon>Pecora</taxon>
        <taxon>Bovidae</taxon>
        <taxon>Bovinae</taxon>
        <taxon>Bos</taxon>
    </lineage>
</organism>
<comment type="function">
    <text evidence="2 3">Bone morphogenetic protein (BMP) type I receptor that is involved in a wide variety of biological processes, including bone, heart, cartilage, nervous, and reproductive system development and regulation. As a type I receptor, forms heterotetrameric receptor complexes with the type II receptors AMHR2, ACVR2A ors ACVR2B. Upon binding of ligands such as BMP7 or BMP9 to the heteromeric complexes, type II receptors transphosphorylate ACVR1 intracellular domain. In turn, ACVR1 kinase domain is activated and subsequently phosphorylates SMAD1/5/8 proteins that transduce the signal. In addition to its role in mediating BMP pathway-specific signaling, suppresses TGFbeta/activin pathway signaling by interfering with the binding of activin to its type II receptor. Besides canonical SMAD signaling, can activate non-canonical signaling pathways. May promote the expression of HAMP, potentially via its interaction with BMP6 (By similarity).</text>
</comment>
<comment type="catalytic activity">
    <reaction>
        <text>L-threonyl-[receptor-protein] + ATP = O-phospho-L-threonyl-[receptor-protein] + ADP + H(+)</text>
        <dbReference type="Rhea" id="RHEA:44880"/>
        <dbReference type="Rhea" id="RHEA-COMP:11024"/>
        <dbReference type="Rhea" id="RHEA-COMP:11025"/>
        <dbReference type="ChEBI" id="CHEBI:15378"/>
        <dbReference type="ChEBI" id="CHEBI:30013"/>
        <dbReference type="ChEBI" id="CHEBI:30616"/>
        <dbReference type="ChEBI" id="CHEBI:61977"/>
        <dbReference type="ChEBI" id="CHEBI:456216"/>
        <dbReference type="EC" id="2.7.11.30"/>
    </reaction>
</comment>
<comment type="catalytic activity">
    <reaction evidence="3">
        <text>L-seryl-[receptor-protein] + ATP = O-phospho-L-seryl-[receptor-protein] + ADP + H(+)</text>
        <dbReference type="Rhea" id="RHEA:18673"/>
        <dbReference type="Rhea" id="RHEA-COMP:11022"/>
        <dbReference type="Rhea" id="RHEA-COMP:11023"/>
        <dbReference type="ChEBI" id="CHEBI:15378"/>
        <dbReference type="ChEBI" id="CHEBI:29999"/>
        <dbReference type="ChEBI" id="CHEBI:30616"/>
        <dbReference type="ChEBI" id="CHEBI:83421"/>
        <dbReference type="ChEBI" id="CHEBI:456216"/>
        <dbReference type="EC" id="2.7.11.30"/>
    </reaction>
</comment>
<comment type="cofactor">
    <cofactor evidence="1">
        <name>Mg(2+)</name>
        <dbReference type="ChEBI" id="CHEBI:18420"/>
    </cofactor>
    <cofactor evidence="1">
        <name>Mn(2+)</name>
        <dbReference type="ChEBI" id="CHEBI:29035"/>
    </cofactor>
</comment>
<comment type="subunit">
    <text evidence="2 3">Interacts with FKBP1A (By similarity). Interacts with FCHO1 (By similarity). Interacts with CLU. Interacts with type II receptors AMHR2 and ACVR2A (By similarity). Interacts with BMP7 (By similarity). Interacts with BMP9 (By similarity). Interacts with BMP6 (when glycosylated); the interaction may induce HAMP expression (By similarity). Interacts with TSC22D1/TSC-22 (By similarity).</text>
</comment>
<comment type="subcellular location">
    <subcellularLocation>
        <location>Membrane</location>
        <topology>Single-pass type I membrane protein</topology>
    </subcellularLocation>
</comment>
<comment type="similarity">
    <text evidence="8">Belongs to the protein kinase superfamily. TKL Ser/Thr protein kinase family. TGFB receptor subfamily.</text>
</comment>
<feature type="signal peptide" evidence="1">
    <location>
        <begin position="1"/>
        <end position="20"/>
    </location>
</feature>
<feature type="chain" id="PRO_0000024393" description="Activin receptor type-1">
    <location>
        <begin position="21"/>
        <end position="509"/>
    </location>
</feature>
<feature type="topological domain" description="Extracellular" evidence="4">
    <location>
        <begin position="21"/>
        <end position="123"/>
    </location>
</feature>
<feature type="transmembrane region" description="Helical" evidence="4">
    <location>
        <begin position="124"/>
        <end position="146"/>
    </location>
</feature>
<feature type="topological domain" description="Cytoplasmic" evidence="4">
    <location>
        <begin position="147"/>
        <end position="509"/>
    </location>
</feature>
<feature type="domain" description="GS" evidence="6">
    <location>
        <begin position="178"/>
        <end position="207"/>
    </location>
</feature>
<feature type="domain" description="Protein kinase" evidence="5">
    <location>
        <begin position="208"/>
        <end position="502"/>
    </location>
</feature>
<feature type="active site" description="Proton acceptor" evidence="5 7">
    <location>
        <position position="336"/>
    </location>
</feature>
<feature type="binding site" evidence="5">
    <location>
        <begin position="214"/>
        <end position="222"/>
    </location>
    <ligand>
        <name>ATP</name>
        <dbReference type="ChEBI" id="CHEBI:30616"/>
    </ligand>
</feature>
<feature type="binding site" evidence="5">
    <location>
        <position position="235"/>
    </location>
    <ligand>
        <name>ATP</name>
        <dbReference type="ChEBI" id="CHEBI:30616"/>
    </ligand>
</feature>
<feature type="modified residue" description="Phosphoserine" evidence="3">
    <location>
        <position position="501"/>
    </location>
</feature>
<feature type="glycosylation site" description="N-linked (GlcNAc...) asparagine" evidence="4">
    <location>
        <position position="102"/>
    </location>
</feature>